<feature type="chain" id="PRO_0000460832" description="Chitin synthase Vb">
    <location>
        <begin position="1"/>
        <end position="1780"/>
    </location>
</feature>
<feature type="transmembrane region" description="Helical" evidence="1">
    <location>
        <begin position="740"/>
        <end position="760"/>
    </location>
</feature>
<feature type="transmembrane region" description="Helical" evidence="1">
    <location>
        <begin position="776"/>
        <end position="796"/>
    </location>
</feature>
<feature type="transmembrane region" description="Helical" evidence="1">
    <location>
        <begin position="1046"/>
        <end position="1066"/>
    </location>
</feature>
<feature type="transmembrane region" description="Helical" evidence="1">
    <location>
        <begin position="1442"/>
        <end position="1462"/>
    </location>
</feature>
<feature type="transmembrane region" description="Helical" evidence="1">
    <location>
        <begin position="1469"/>
        <end position="1489"/>
    </location>
</feature>
<feature type="transmembrane region" description="Helical" evidence="1">
    <location>
        <begin position="1497"/>
        <end position="1517"/>
    </location>
</feature>
<feature type="domain" description="Cytochrome b5 heme-binding" evidence="2">
    <location>
        <begin position="805"/>
        <end position="866"/>
    </location>
</feature>
<feature type="domain" description="DEK-C" evidence="4">
    <location>
        <begin position="1722"/>
        <end position="1778"/>
    </location>
</feature>
<feature type="region of interest" description="Disordered" evidence="5">
    <location>
        <begin position="1649"/>
        <end position="1691"/>
    </location>
</feature>
<feature type="compositionally biased region" description="Polar residues" evidence="5">
    <location>
        <begin position="1668"/>
        <end position="1681"/>
    </location>
</feature>
<feature type="glycosylation site" description="N-linked (GlcNAc...) asparagine" evidence="3">
    <location>
        <position position="133"/>
    </location>
</feature>
<feature type="glycosylation site" description="N-linked (GlcNAc...) asparagine" evidence="3">
    <location>
        <position position="153"/>
    </location>
</feature>
<feature type="glycosylation site" description="N-linked (GlcNAc...) asparagine" evidence="3">
    <location>
        <position position="629"/>
    </location>
</feature>
<feature type="glycosylation site" description="N-linked (GlcNAc...) asparagine" evidence="3">
    <location>
        <position position="644"/>
    </location>
</feature>
<feature type="glycosylation site" description="N-linked (GlcNAc...) asparagine" evidence="3">
    <location>
        <position position="655"/>
    </location>
</feature>
<feature type="glycosylation site" description="N-linked (GlcNAc...) asparagine" evidence="3">
    <location>
        <position position="660"/>
    </location>
</feature>
<feature type="glycosylation site" description="N-linked (GlcNAc...) asparagine" evidence="3">
    <location>
        <position position="888"/>
    </location>
</feature>
<feature type="glycosylation site" description="N-linked (GlcNAc...) asparagine" evidence="3">
    <location>
        <position position="1009"/>
    </location>
</feature>
<feature type="glycosylation site" description="N-linked (GlcNAc...) asparagine" evidence="3">
    <location>
        <position position="1411"/>
    </location>
</feature>
<feature type="glycosylation site" description="N-linked (GlcNAc...) asparagine" evidence="3">
    <location>
        <position position="1524"/>
    </location>
</feature>
<reference key="1">
    <citation type="journal article" date="2007" name="Eukaryot. Cell">
        <title>ChsVb, a class VII chitin synthase involved in septation, is critical for pathogenicity in Fusarium oxysporum.</title>
        <authorList>
            <person name="Martin-Urdiroz M."/>
            <person name="Roncero M.I."/>
            <person name="Gonzalez-Reyes J.A."/>
            <person name="Ruiz-Roldan C."/>
        </authorList>
    </citation>
    <scope>NUCLEOTIDE SEQUENCE [GENOMIC DNA]</scope>
    <scope>FUNCTION</scope>
    <scope>INDUCTION</scope>
    <scope>DISRUPTION PHENOTYPE</scope>
    <scope>DOMAIN</scope>
    <source>
        <strain>4287 / CBS 123668 / FGSC 9935 / NRRL 34936</strain>
    </source>
</reference>
<reference key="2">
    <citation type="journal article" date="2010" name="Nature">
        <title>Comparative genomics reveals mobile pathogenicity chromosomes in Fusarium.</title>
        <authorList>
            <person name="Ma L.-J."/>
            <person name="van der Does H.C."/>
            <person name="Borkovich K.A."/>
            <person name="Coleman J.J."/>
            <person name="Daboussi M.-J."/>
            <person name="Di Pietro A."/>
            <person name="Dufresne M."/>
            <person name="Freitag M."/>
            <person name="Grabherr M."/>
            <person name="Henrissat B."/>
            <person name="Houterman P.M."/>
            <person name="Kang S."/>
            <person name="Shim W.-B."/>
            <person name="Woloshuk C."/>
            <person name="Xie X."/>
            <person name="Xu J.-R."/>
            <person name="Antoniw J."/>
            <person name="Baker S.E."/>
            <person name="Bluhm B.H."/>
            <person name="Breakspear A."/>
            <person name="Brown D.W."/>
            <person name="Butchko R.A.E."/>
            <person name="Chapman S."/>
            <person name="Coulson R."/>
            <person name="Coutinho P.M."/>
            <person name="Danchin E.G.J."/>
            <person name="Diener A."/>
            <person name="Gale L.R."/>
            <person name="Gardiner D.M."/>
            <person name="Goff S."/>
            <person name="Hammond-Kosack K.E."/>
            <person name="Hilburn K."/>
            <person name="Hua-Van A."/>
            <person name="Jonkers W."/>
            <person name="Kazan K."/>
            <person name="Kodira C.D."/>
            <person name="Koehrsen M."/>
            <person name="Kumar L."/>
            <person name="Lee Y.-H."/>
            <person name="Li L."/>
            <person name="Manners J.M."/>
            <person name="Miranda-Saavedra D."/>
            <person name="Mukherjee M."/>
            <person name="Park G."/>
            <person name="Park J."/>
            <person name="Park S.-Y."/>
            <person name="Proctor R.H."/>
            <person name="Regev A."/>
            <person name="Ruiz-Roldan M.C."/>
            <person name="Sain D."/>
            <person name="Sakthikumar S."/>
            <person name="Sykes S."/>
            <person name="Schwartz D.C."/>
            <person name="Turgeon B.G."/>
            <person name="Wapinski I."/>
            <person name="Yoder O."/>
            <person name="Young S."/>
            <person name="Zeng Q."/>
            <person name="Zhou S."/>
            <person name="Galagan J."/>
            <person name="Cuomo C.A."/>
            <person name="Kistler H.C."/>
            <person name="Rep M."/>
        </authorList>
    </citation>
    <scope>NUCLEOTIDE SEQUENCE [LARGE SCALE GENOMIC DNA]</scope>
    <source>
        <strain>4287 / CBS 123668 / FGSC 9935 / NRRL 34936</strain>
    </source>
</reference>
<comment type="function">
    <text evidence="6 9">Polymerizes chitin, a structural polymer of the cell wall and septum, by transferring the sugar moiety of UDP-GlcNAc to the non-reducing end of the growing chitin polymer (Probable). ChsV and chsVb do perform additive, but not redundant, functions in septum formation (PubMed:17993572). Functions not only in the maintenance of cell wall integrity under different osmotic conditions but also in polarized cell wall synthesis (PubMed:17993572). Plays an important role in the complex infection process of this fungus (PubMed:17993572).</text>
</comment>
<comment type="catalytic activity">
    <reaction evidence="9">
        <text>[(1-&gt;4)-N-acetyl-beta-D-glucosaminyl](n) + UDP-N-acetyl-alpha-D-glucosamine = [(1-&gt;4)-N-acetyl-beta-D-glucosaminyl](n+1) + UDP + H(+)</text>
        <dbReference type="Rhea" id="RHEA:16637"/>
        <dbReference type="Rhea" id="RHEA-COMP:9593"/>
        <dbReference type="Rhea" id="RHEA-COMP:9595"/>
        <dbReference type="ChEBI" id="CHEBI:15378"/>
        <dbReference type="ChEBI" id="CHEBI:17029"/>
        <dbReference type="ChEBI" id="CHEBI:57705"/>
        <dbReference type="ChEBI" id="CHEBI:58223"/>
        <dbReference type="EC" id="2.4.1.16"/>
    </reaction>
    <physiologicalReaction direction="left-to-right" evidence="9">
        <dbReference type="Rhea" id="RHEA:16638"/>
    </physiologicalReaction>
</comment>
<comment type="subcellular location">
    <subcellularLocation>
        <location evidence="8">Cell membrane</location>
        <topology evidence="1">Multi-pass membrane protein</topology>
    </subcellularLocation>
</comment>
<comment type="induction">
    <text evidence="6">Expression is induced in the absence of chsv.</text>
</comment>
<comment type="domain">
    <text evidence="6">The ChsVb myosin motor-like domain (MMD) is shorter than the MMD of class V chitin synthases and does not contain typical ATP-binding motifs.</text>
</comment>
<comment type="disruption phenotype">
    <text evidence="6">Impairs the ability to infect and colonize tomato plants or to grow invasively on tomato fruit tissue (PubMed:17993572). Leads to hypersensitivity to compounds that interfere with fungal cell wall assembly, produces lemon-like shaped conidia, and shows swollen balloon-like structures in hyphal subapical regions, thickened walls, aberrant septa, and intrahyphal hyphae (PubMed:17993572).</text>
</comment>
<comment type="similarity">
    <text evidence="8">Belongs to the chitin synthase family. Class VII subfamily.</text>
</comment>
<gene>
    <name evidence="7" type="primary">chsVb</name>
    <name type="ORF">FOXG_04163</name>
</gene>
<evidence type="ECO:0000255" key="1"/>
<evidence type="ECO:0000255" key="2">
    <source>
        <dbReference type="PROSITE-ProRule" id="PRU00279"/>
    </source>
</evidence>
<evidence type="ECO:0000255" key="3">
    <source>
        <dbReference type="PROSITE-ProRule" id="PRU00498"/>
    </source>
</evidence>
<evidence type="ECO:0000255" key="4">
    <source>
        <dbReference type="PROSITE-ProRule" id="PRU01342"/>
    </source>
</evidence>
<evidence type="ECO:0000256" key="5">
    <source>
        <dbReference type="SAM" id="MobiDB-lite"/>
    </source>
</evidence>
<evidence type="ECO:0000269" key="6">
    <source>
    </source>
</evidence>
<evidence type="ECO:0000303" key="7">
    <source>
    </source>
</evidence>
<evidence type="ECO:0000305" key="8"/>
<evidence type="ECO:0000305" key="9">
    <source>
    </source>
</evidence>
<organism>
    <name type="scientific">Fusarium oxysporum f. sp. lycopersici (strain 4287 / CBS 123668 / FGSC 9935 / NRRL 34936)</name>
    <name type="common">Fusarium vascular wilt of tomato</name>
    <dbReference type="NCBI Taxonomy" id="426428"/>
    <lineage>
        <taxon>Eukaryota</taxon>
        <taxon>Fungi</taxon>
        <taxon>Dikarya</taxon>
        <taxon>Ascomycota</taxon>
        <taxon>Pezizomycotina</taxon>
        <taxon>Sordariomycetes</taxon>
        <taxon>Hypocreomycetidae</taxon>
        <taxon>Hypocreales</taxon>
        <taxon>Nectriaceae</taxon>
        <taxon>Fusarium</taxon>
        <taxon>Fusarium oxysporum species complex</taxon>
    </lineage>
</organism>
<dbReference type="EC" id="2.4.1.16" evidence="9"/>
<dbReference type="EMBL" id="EF673037">
    <property type="protein sequence ID" value="ABS11265.1"/>
    <property type="molecule type" value="Genomic_DNA"/>
</dbReference>
<dbReference type="EMBL" id="DS231699">
    <property type="protein sequence ID" value="KNB00666.1"/>
    <property type="molecule type" value="Genomic_DNA"/>
</dbReference>
<dbReference type="RefSeq" id="XP_018238711.1">
    <property type="nucleotide sequence ID" value="XM_018382064.1"/>
</dbReference>
<dbReference type="SMR" id="A0A0J9UR47"/>
<dbReference type="CAZy" id="GT2">
    <property type="family name" value="Glycosyltransferase Family 2"/>
</dbReference>
<dbReference type="EnsemblFungi" id="FOXG_04163T0">
    <property type="protein sequence ID" value="FOXG_04163P0"/>
    <property type="gene ID" value="FOXG_04163"/>
</dbReference>
<dbReference type="GeneID" id="28946227"/>
<dbReference type="KEGG" id="fox:FOXG_04163"/>
<dbReference type="OMA" id="RLAEWAN"/>
<dbReference type="OrthoDB" id="76614at110618"/>
<dbReference type="Proteomes" id="UP000009097">
    <property type="component" value="Unassembled WGS sequence"/>
</dbReference>
<dbReference type="GO" id="GO:0030428">
    <property type="term" value="C:cell septum"/>
    <property type="evidence" value="ECO:0007669"/>
    <property type="project" value="TreeGrafter"/>
</dbReference>
<dbReference type="GO" id="GO:0016459">
    <property type="term" value="C:myosin complex"/>
    <property type="evidence" value="ECO:0007669"/>
    <property type="project" value="UniProtKB-KW"/>
</dbReference>
<dbReference type="GO" id="GO:0005886">
    <property type="term" value="C:plasma membrane"/>
    <property type="evidence" value="ECO:0007669"/>
    <property type="project" value="UniProtKB-SubCell"/>
</dbReference>
<dbReference type="GO" id="GO:0005524">
    <property type="term" value="F:ATP binding"/>
    <property type="evidence" value="ECO:0007669"/>
    <property type="project" value="InterPro"/>
</dbReference>
<dbReference type="GO" id="GO:0004100">
    <property type="term" value="F:chitin synthase activity"/>
    <property type="evidence" value="ECO:0007669"/>
    <property type="project" value="InterPro"/>
</dbReference>
<dbReference type="GO" id="GO:0003774">
    <property type="term" value="F:cytoskeletal motor activity"/>
    <property type="evidence" value="ECO:0007669"/>
    <property type="project" value="InterPro"/>
</dbReference>
<dbReference type="GO" id="GO:0006031">
    <property type="term" value="P:chitin biosynthetic process"/>
    <property type="evidence" value="ECO:0007669"/>
    <property type="project" value="TreeGrafter"/>
</dbReference>
<dbReference type="GO" id="GO:0031505">
    <property type="term" value="P:fungal-type cell wall organization"/>
    <property type="evidence" value="ECO:0007669"/>
    <property type="project" value="TreeGrafter"/>
</dbReference>
<dbReference type="FunFam" id="1.10.10.820:FF:000010">
    <property type="entry name" value="Chitin synthase 6"/>
    <property type="match status" value="1"/>
</dbReference>
<dbReference type="Gene3D" id="1.10.10.820">
    <property type="match status" value="1"/>
</dbReference>
<dbReference type="Gene3D" id="3.10.120.10">
    <property type="entry name" value="Cytochrome b5-like heme/steroid binding domain"/>
    <property type="match status" value="1"/>
</dbReference>
<dbReference type="Gene3D" id="1.10.10.60">
    <property type="entry name" value="Homeodomain-like"/>
    <property type="match status" value="1"/>
</dbReference>
<dbReference type="Gene3D" id="3.40.850.10">
    <property type="entry name" value="Kinesin motor domain"/>
    <property type="match status" value="1"/>
</dbReference>
<dbReference type="Gene3D" id="1.20.120.720">
    <property type="entry name" value="Myosin VI head, motor domain, U50 subdomain"/>
    <property type="match status" value="1"/>
</dbReference>
<dbReference type="InterPro" id="IPR004835">
    <property type="entry name" value="Chitin_synth"/>
</dbReference>
<dbReference type="InterPro" id="IPR001199">
    <property type="entry name" value="Cyt_B5-like_heme/steroid-bd"/>
</dbReference>
<dbReference type="InterPro" id="IPR036400">
    <property type="entry name" value="Cyt_B5-like_heme/steroid_sf"/>
</dbReference>
<dbReference type="InterPro" id="IPR014876">
    <property type="entry name" value="DEK_C"/>
</dbReference>
<dbReference type="InterPro" id="IPR036961">
    <property type="entry name" value="Kinesin_motor_dom_sf"/>
</dbReference>
<dbReference type="InterPro" id="IPR001609">
    <property type="entry name" value="Myosin_head_motor_dom-like"/>
</dbReference>
<dbReference type="InterPro" id="IPR029044">
    <property type="entry name" value="Nucleotide-diphossugar_trans"/>
</dbReference>
<dbReference type="InterPro" id="IPR027417">
    <property type="entry name" value="P-loop_NTPase"/>
</dbReference>
<dbReference type="PANTHER" id="PTHR22914">
    <property type="entry name" value="CHITIN SYNTHASE"/>
    <property type="match status" value="1"/>
</dbReference>
<dbReference type="PANTHER" id="PTHR22914:SF13">
    <property type="entry name" value="CHITIN SYNTHASE"/>
    <property type="match status" value="1"/>
</dbReference>
<dbReference type="Pfam" id="PF03142">
    <property type="entry name" value="Chitin_synth_2"/>
    <property type="match status" value="1"/>
</dbReference>
<dbReference type="Pfam" id="PF00173">
    <property type="entry name" value="Cyt-b5"/>
    <property type="match status" value="1"/>
</dbReference>
<dbReference type="Pfam" id="PF08766">
    <property type="entry name" value="DEK_C"/>
    <property type="match status" value="1"/>
</dbReference>
<dbReference type="SMART" id="SM00242">
    <property type="entry name" value="MYSc"/>
    <property type="match status" value="1"/>
</dbReference>
<dbReference type="SUPFAM" id="SSF55856">
    <property type="entry name" value="Cytochrome b5-like heme/steroid binding domain"/>
    <property type="match status" value="1"/>
</dbReference>
<dbReference type="SUPFAM" id="SSF109715">
    <property type="entry name" value="DEK C-terminal domain"/>
    <property type="match status" value="1"/>
</dbReference>
<dbReference type="SUPFAM" id="SSF53448">
    <property type="entry name" value="Nucleotide-diphospho-sugar transferases"/>
    <property type="match status" value="1"/>
</dbReference>
<dbReference type="SUPFAM" id="SSF52540">
    <property type="entry name" value="P-loop containing nucleoside triphosphate hydrolases"/>
    <property type="match status" value="1"/>
</dbReference>
<dbReference type="PROSITE" id="PS51998">
    <property type="entry name" value="DEK_C"/>
    <property type="match status" value="1"/>
</dbReference>
<proteinExistence type="evidence at transcript level"/>
<name>CHS5B_FUSO4</name>
<protein>
    <recommendedName>
        <fullName evidence="7">Chitin synthase Vb</fullName>
        <ecNumber evidence="9">2.4.1.16</ecNumber>
    </recommendedName>
    <alternativeName>
        <fullName evidence="8">Chitin-UDP acetyl-glucosaminyl transferase Vb</fullName>
    </alternativeName>
    <alternativeName>
        <fullName evidence="7">Class-VII chitin synthase Vb</fullName>
    </alternativeName>
</protein>
<keyword id="KW-1003">Cell membrane</keyword>
<keyword id="KW-0325">Glycoprotein</keyword>
<keyword id="KW-0328">Glycosyltransferase</keyword>
<keyword id="KW-0472">Membrane</keyword>
<keyword id="KW-0505">Motor protein</keyword>
<keyword id="KW-0518">Myosin</keyword>
<keyword id="KW-1185">Reference proteome</keyword>
<keyword id="KW-0808">Transferase</keyword>
<keyword id="KW-0812">Transmembrane</keyword>
<keyword id="KW-1133">Transmembrane helix</keyword>
<accession>A0A0J9UR47</accession>
<accession>A7L5W4</accession>
<sequence length="1780" mass="198287">MASRMSMYSMASEALGGGPQAAQVSTTTLLNAIHNIYLSSQPYQLDASTSLVVNTWLTAAQAGATVDATLAARAWEHARRRAEDGCVILGSLHQSTPSLLVPFLNTFPFAIPASIYKSLEALQPFLRCVTPYNASAPRQIALGVTLTLSLGGNVTGASLALSQGGIDTENGLLNIPAEAGYRAFDVFYYLLTSASTPAEREFLGLKSPSAYALLARSGTYEPPSYLITADDGAAADDFRQALKEIGIKGSAHRNFISTLAGLLKLGNTLDYDADSDDFEEICEDVSGLLGMEPEVLMQQLSTEDRRTLVGGLYEALVDWVISKANSAIAAQMLRIRDGDESIDGRGVRTPTSNEDGDTVSITVVEVPEPSIGRALAMRTIFDDTIGINAEMIEDGVEVHPVGSSVVREMQQAVSDVAPDLGIMTGPQGRDRQHDLEKREVILEKVAYGSEDDSFVKKLLFPVEGEGVSLGRAGRFDLPALLSASRTWFHLSLHPTDDSPANLATLPAITSAWSAGTVSRQLRSWRLPEWANRRNRNLDYTADFDVDEFVGRYGALGCKDGKDGIETWMLERGWSNGEVFIGKERIWVREGPWWEAETMLDIKPAHSLQSMGQNPFTSGFDTSYSANPPNGSGFFPPPAMDNSLNGSNDQLMHTRNFSQGNMSQVTLNQHQNLNPQSAPSIAPSAMRNVQTTGDYGLGTKGDTYKGQVYYNEDGEFTGILDGELAKNKKIESKPLPFGRRAWIAFVWALTFWIPSPLLKFIGRMRRPDVRMAWREKFVLFFLIILINGMVVFWIIGFGKLLCPNANKAWNVKEVATHAEDEKSFWVAIHGKVYDITDFWQQQHSDTSIKVTKQNMLPLSGMVMDNYFMPPLNRACRGLGIKETTQLTFNDTITNPLAQHTSGFYTRDRTSALHDPDWYWKKFQPKIKEYYHGNLVWKKSKVKNEGENEQHMWATYGNEVYDLTDYLHTLDVNDNFDSYKFLNEDMVDLWKNSPGTNIKKDLDLLIANAKNETVSANLKNSWQCIQNIAYKGILDFRDSARCQVNNYLLLAFAIIICIVTAVKFLAALQFGSKRRPSPQDKFVICQVPVYTEGEDSLRKALDSLTALQYDNKRKLICVICDGVVVGQGNDRPTPKIVLDILGVDPKVDPPALPFKSVGSSSEQLNYGKVYSGLYEFEGNVVPYIVVVKVGKESEQSKAKPGNRGKRDSQILLMSFLNRVHHRAPMSPLELEMFHQVNNIIGVDPELYEYLLMVDADTCVEEDSLNRLVAACAHNAKIAGICGETALENDEKTWWTMIQVYEYFISHHLAKAFESLFGSVTCLPGCFTMYRLRSVDKGKPLIISDAVIKDYSVCDVDTLHKKNLLSLGEDRYLTTLMTKYFPEMSYKFIPDAQCKTAAPESWSVLLSQRRRWINSTIHNLVELMQLKELCGFCCFSMRFVVFIDLCGTIILPSTCVYIGYLIYILATGSGPIPYISLAMIGAVYGLQALIFILKRQWQHIGWMIIYILAFPIYSFILPLYSFWNQDNFSWGNTRIVIGEKGNKQVVAVDDEGFDPRSIPLQRWDDYALANNLPGRRGGYQEKTDYSYGDNYELDEIKSVYSAGPQGSVLTGMPGRNTYMPPQSPAFNNGRASTMGFQDSPMQHRQSMMSMGTGVHDMRSQSPYQDYPGQHPSVSNLRGQANLSPATGGGHSRSGTALGFSSGARSPMPDAMRSQSSFDFQHGHAGPNDMAIVESIRSVLCEVDLDTVTKKQVRALVEQRLQTELVGERRTFMDRQIDHELENM</sequence>